<comment type="function">
    <text evidence="1">Reversibly transfers an adenylyl group from ATP to 4'-phosphopantetheine, yielding dephospho-CoA (dPCoA) and pyrophosphate.</text>
</comment>
<comment type="catalytic activity">
    <reaction evidence="1">
        <text>(R)-4'-phosphopantetheine + ATP + H(+) = 3'-dephospho-CoA + diphosphate</text>
        <dbReference type="Rhea" id="RHEA:19801"/>
        <dbReference type="ChEBI" id="CHEBI:15378"/>
        <dbReference type="ChEBI" id="CHEBI:30616"/>
        <dbReference type="ChEBI" id="CHEBI:33019"/>
        <dbReference type="ChEBI" id="CHEBI:57328"/>
        <dbReference type="ChEBI" id="CHEBI:61723"/>
        <dbReference type="EC" id="2.7.7.3"/>
    </reaction>
</comment>
<comment type="cofactor">
    <cofactor evidence="1">
        <name>Mg(2+)</name>
        <dbReference type="ChEBI" id="CHEBI:18420"/>
    </cofactor>
</comment>
<comment type="pathway">
    <text evidence="1">Cofactor biosynthesis; coenzyme A biosynthesis; CoA from (R)-pantothenate: step 4/5.</text>
</comment>
<comment type="subunit">
    <text evidence="1">Homohexamer.</text>
</comment>
<comment type="subcellular location">
    <subcellularLocation>
        <location evidence="1">Cytoplasm</location>
    </subcellularLocation>
</comment>
<comment type="similarity">
    <text evidence="1">Belongs to the bacterial CoaD family.</text>
</comment>
<gene>
    <name evidence="1" type="primary">coaD</name>
    <name type="ordered locus">CPR_1700</name>
</gene>
<keyword id="KW-0067">ATP-binding</keyword>
<keyword id="KW-0173">Coenzyme A biosynthesis</keyword>
<keyword id="KW-0963">Cytoplasm</keyword>
<keyword id="KW-0460">Magnesium</keyword>
<keyword id="KW-0547">Nucleotide-binding</keyword>
<keyword id="KW-0548">Nucleotidyltransferase</keyword>
<keyword id="KW-0808">Transferase</keyword>
<dbReference type="EC" id="2.7.7.3" evidence="1"/>
<dbReference type="EMBL" id="CP000312">
    <property type="protein sequence ID" value="ABG86678.1"/>
    <property type="molecule type" value="Genomic_DNA"/>
</dbReference>
<dbReference type="RefSeq" id="WP_011592618.1">
    <property type="nucleotide sequence ID" value="NC_008262.1"/>
</dbReference>
<dbReference type="SMR" id="Q0SS92"/>
<dbReference type="KEGG" id="cpr:CPR_1700"/>
<dbReference type="UniPathway" id="UPA00241">
    <property type="reaction ID" value="UER00355"/>
</dbReference>
<dbReference type="Proteomes" id="UP000001824">
    <property type="component" value="Chromosome"/>
</dbReference>
<dbReference type="GO" id="GO:0005737">
    <property type="term" value="C:cytoplasm"/>
    <property type="evidence" value="ECO:0007669"/>
    <property type="project" value="UniProtKB-SubCell"/>
</dbReference>
<dbReference type="GO" id="GO:0005524">
    <property type="term" value="F:ATP binding"/>
    <property type="evidence" value="ECO:0007669"/>
    <property type="project" value="UniProtKB-KW"/>
</dbReference>
<dbReference type="GO" id="GO:0004595">
    <property type="term" value="F:pantetheine-phosphate adenylyltransferase activity"/>
    <property type="evidence" value="ECO:0007669"/>
    <property type="project" value="UniProtKB-UniRule"/>
</dbReference>
<dbReference type="GO" id="GO:0015937">
    <property type="term" value="P:coenzyme A biosynthetic process"/>
    <property type="evidence" value="ECO:0007669"/>
    <property type="project" value="UniProtKB-UniRule"/>
</dbReference>
<dbReference type="CDD" id="cd02163">
    <property type="entry name" value="PPAT"/>
    <property type="match status" value="1"/>
</dbReference>
<dbReference type="Gene3D" id="3.40.50.620">
    <property type="entry name" value="HUPs"/>
    <property type="match status" value="1"/>
</dbReference>
<dbReference type="HAMAP" id="MF_00151">
    <property type="entry name" value="PPAT_bact"/>
    <property type="match status" value="1"/>
</dbReference>
<dbReference type="InterPro" id="IPR004821">
    <property type="entry name" value="Cyt_trans-like"/>
</dbReference>
<dbReference type="InterPro" id="IPR001980">
    <property type="entry name" value="PPAT"/>
</dbReference>
<dbReference type="InterPro" id="IPR014729">
    <property type="entry name" value="Rossmann-like_a/b/a_fold"/>
</dbReference>
<dbReference type="NCBIfam" id="TIGR01510">
    <property type="entry name" value="coaD_prev_kdtB"/>
    <property type="match status" value="1"/>
</dbReference>
<dbReference type="NCBIfam" id="TIGR00125">
    <property type="entry name" value="cyt_tran_rel"/>
    <property type="match status" value="1"/>
</dbReference>
<dbReference type="PANTHER" id="PTHR21342">
    <property type="entry name" value="PHOSPHOPANTETHEINE ADENYLYLTRANSFERASE"/>
    <property type="match status" value="1"/>
</dbReference>
<dbReference type="PANTHER" id="PTHR21342:SF1">
    <property type="entry name" value="PHOSPHOPANTETHEINE ADENYLYLTRANSFERASE"/>
    <property type="match status" value="1"/>
</dbReference>
<dbReference type="Pfam" id="PF01467">
    <property type="entry name" value="CTP_transf_like"/>
    <property type="match status" value="1"/>
</dbReference>
<dbReference type="PRINTS" id="PR01020">
    <property type="entry name" value="LPSBIOSNTHSS"/>
</dbReference>
<dbReference type="SUPFAM" id="SSF52374">
    <property type="entry name" value="Nucleotidylyl transferase"/>
    <property type="match status" value="1"/>
</dbReference>
<feature type="chain" id="PRO_1000011130" description="Phosphopantetheine adenylyltransferase">
    <location>
        <begin position="1"/>
        <end position="164"/>
    </location>
</feature>
<feature type="binding site" evidence="1">
    <location>
        <begin position="9"/>
        <end position="10"/>
    </location>
    <ligand>
        <name>ATP</name>
        <dbReference type="ChEBI" id="CHEBI:30616"/>
    </ligand>
</feature>
<feature type="binding site" evidence="1">
    <location>
        <position position="9"/>
    </location>
    <ligand>
        <name>substrate</name>
    </ligand>
</feature>
<feature type="binding site" evidence="1">
    <location>
        <position position="17"/>
    </location>
    <ligand>
        <name>ATP</name>
        <dbReference type="ChEBI" id="CHEBI:30616"/>
    </ligand>
</feature>
<feature type="binding site" evidence="1">
    <location>
        <position position="41"/>
    </location>
    <ligand>
        <name>substrate</name>
    </ligand>
</feature>
<feature type="binding site" evidence="1">
    <location>
        <position position="73"/>
    </location>
    <ligand>
        <name>substrate</name>
    </ligand>
</feature>
<feature type="binding site" evidence="1">
    <location>
        <position position="87"/>
    </location>
    <ligand>
        <name>substrate</name>
    </ligand>
</feature>
<feature type="binding site" evidence="1">
    <location>
        <begin position="88"/>
        <end position="90"/>
    </location>
    <ligand>
        <name>ATP</name>
        <dbReference type="ChEBI" id="CHEBI:30616"/>
    </ligand>
</feature>
<feature type="binding site" evidence="1">
    <location>
        <position position="98"/>
    </location>
    <ligand>
        <name>ATP</name>
        <dbReference type="ChEBI" id="CHEBI:30616"/>
    </ligand>
</feature>
<feature type="binding site" evidence="1">
    <location>
        <begin position="123"/>
        <end position="129"/>
    </location>
    <ligand>
        <name>ATP</name>
        <dbReference type="ChEBI" id="CHEBI:30616"/>
    </ligand>
</feature>
<feature type="site" description="Transition state stabilizer" evidence="1">
    <location>
        <position position="17"/>
    </location>
</feature>
<name>COAD_CLOPS</name>
<protein>
    <recommendedName>
        <fullName evidence="1">Phosphopantetheine adenylyltransferase</fullName>
        <ecNumber evidence="1">2.7.7.3</ecNumber>
    </recommendedName>
    <alternativeName>
        <fullName evidence="1">Dephospho-CoA pyrophosphorylase</fullName>
    </alternativeName>
    <alternativeName>
        <fullName evidence="1">Pantetheine-phosphate adenylyltransferase</fullName>
        <shortName evidence="1">PPAT</shortName>
    </alternativeName>
</protein>
<accession>Q0SS92</accession>
<proteinExistence type="inferred from homology"/>
<organism>
    <name type="scientific">Clostridium perfringens (strain SM101 / Type A)</name>
    <dbReference type="NCBI Taxonomy" id="289380"/>
    <lineage>
        <taxon>Bacteria</taxon>
        <taxon>Bacillati</taxon>
        <taxon>Bacillota</taxon>
        <taxon>Clostridia</taxon>
        <taxon>Eubacteriales</taxon>
        <taxon>Clostridiaceae</taxon>
        <taxon>Clostridium</taxon>
    </lineage>
</organism>
<sequence>MRVGVYPGSFDPITKGHLDLIERAASKFDKVIVAVLININKKGMFSIEERVNLIEKCVAKYNNVEVKSFNGLLIDFVRKEKADVIIKGLRSVTDFEYEFQMALMNRELANEVETVFMVTSPNYSYISSSAIKQVASFSGEIKNFVPKEIVEDLEERIISLRGEG</sequence>
<reference key="1">
    <citation type="journal article" date="2006" name="Genome Res.">
        <title>Skewed genomic variability in strains of the toxigenic bacterial pathogen, Clostridium perfringens.</title>
        <authorList>
            <person name="Myers G.S.A."/>
            <person name="Rasko D.A."/>
            <person name="Cheung J.K."/>
            <person name="Ravel J."/>
            <person name="Seshadri R."/>
            <person name="DeBoy R.T."/>
            <person name="Ren Q."/>
            <person name="Varga J."/>
            <person name="Awad M.M."/>
            <person name="Brinkac L.M."/>
            <person name="Daugherty S.C."/>
            <person name="Haft D.H."/>
            <person name="Dodson R.J."/>
            <person name="Madupu R."/>
            <person name="Nelson W.C."/>
            <person name="Rosovitz M.J."/>
            <person name="Sullivan S.A."/>
            <person name="Khouri H."/>
            <person name="Dimitrov G.I."/>
            <person name="Watkins K.L."/>
            <person name="Mulligan S."/>
            <person name="Benton J."/>
            <person name="Radune D."/>
            <person name="Fisher D.J."/>
            <person name="Atkins H.S."/>
            <person name="Hiscox T."/>
            <person name="Jost B.H."/>
            <person name="Billington S.J."/>
            <person name="Songer J.G."/>
            <person name="McClane B.A."/>
            <person name="Titball R.W."/>
            <person name="Rood J.I."/>
            <person name="Melville S.B."/>
            <person name="Paulsen I.T."/>
        </authorList>
    </citation>
    <scope>NUCLEOTIDE SEQUENCE [LARGE SCALE GENOMIC DNA]</scope>
    <source>
        <strain>SM101 / Type A</strain>
    </source>
</reference>
<evidence type="ECO:0000255" key="1">
    <source>
        <dbReference type="HAMAP-Rule" id="MF_00151"/>
    </source>
</evidence>